<proteinExistence type="inferred from homology"/>
<gene>
    <name evidence="1" type="primary">fusA</name>
    <name type="ordered locus">bbp_470</name>
</gene>
<dbReference type="EMBL" id="AE016826">
    <property type="protein sequence ID" value="AAO27176.1"/>
    <property type="molecule type" value="Genomic_DNA"/>
</dbReference>
<dbReference type="RefSeq" id="WP_011091577.1">
    <property type="nucleotide sequence ID" value="NC_004545.1"/>
</dbReference>
<dbReference type="SMR" id="P59451"/>
<dbReference type="STRING" id="224915.bbp_470"/>
<dbReference type="KEGG" id="bab:bbp_470"/>
<dbReference type="eggNOG" id="COG0480">
    <property type="taxonomic scope" value="Bacteria"/>
</dbReference>
<dbReference type="HOGENOM" id="CLU_002794_4_1_6"/>
<dbReference type="OrthoDB" id="9804431at2"/>
<dbReference type="Proteomes" id="UP000000601">
    <property type="component" value="Chromosome"/>
</dbReference>
<dbReference type="GO" id="GO:0005737">
    <property type="term" value="C:cytoplasm"/>
    <property type="evidence" value="ECO:0007669"/>
    <property type="project" value="UniProtKB-SubCell"/>
</dbReference>
<dbReference type="GO" id="GO:0005525">
    <property type="term" value="F:GTP binding"/>
    <property type="evidence" value="ECO:0007669"/>
    <property type="project" value="UniProtKB-UniRule"/>
</dbReference>
<dbReference type="GO" id="GO:0003924">
    <property type="term" value="F:GTPase activity"/>
    <property type="evidence" value="ECO:0007669"/>
    <property type="project" value="InterPro"/>
</dbReference>
<dbReference type="GO" id="GO:0097216">
    <property type="term" value="F:guanosine tetraphosphate binding"/>
    <property type="evidence" value="ECO:0007669"/>
    <property type="project" value="UniProtKB-ARBA"/>
</dbReference>
<dbReference type="GO" id="GO:0003746">
    <property type="term" value="F:translation elongation factor activity"/>
    <property type="evidence" value="ECO:0007669"/>
    <property type="project" value="UniProtKB-UniRule"/>
</dbReference>
<dbReference type="GO" id="GO:0032790">
    <property type="term" value="P:ribosome disassembly"/>
    <property type="evidence" value="ECO:0007669"/>
    <property type="project" value="TreeGrafter"/>
</dbReference>
<dbReference type="CDD" id="cd01886">
    <property type="entry name" value="EF-G"/>
    <property type="match status" value="1"/>
</dbReference>
<dbReference type="CDD" id="cd16262">
    <property type="entry name" value="EFG_III"/>
    <property type="match status" value="1"/>
</dbReference>
<dbReference type="CDD" id="cd01434">
    <property type="entry name" value="EFG_mtEFG1_IV"/>
    <property type="match status" value="1"/>
</dbReference>
<dbReference type="CDD" id="cd03713">
    <property type="entry name" value="EFG_mtEFG_C"/>
    <property type="match status" value="1"/>
</dbReference>
<dbReference type="CDD" id="cd04088">
    <property type="entry name" value="EFG_mtEFG_II"/>
    <property type="match status" value="1"/>
</dbReference>
<dbReference type="FunFam" id="2.40.30.10:FF:000006">
    <property type="entry name" value="Elongation factor G"/>
    <property type="match status" value="1"/>
</dbReference>
<dbReference type="FunFam" id="3.30.230.10:FF:000003">
    <property type="entry name" value="Elongation factor G"/>
    <property type="match status" value="1"/>
</dbReference>
<dbReference type="FunFam" id="3.30.70.240:FF:000001">
    <property type="entry name" value="Elongation factor G"/>
    <property type="match status" value="1"/>
</dbReference>
<dbReference type="FunFam" id="3.30.70.870:FF:000001">
    <property type="entry name" value="Elongation factor G"/>
    <property type="match status" value="1"/>
</dbReference>
<dbReference type="FunFam" id="3.40.50.300:FF:000029">
    <property type="entry name" value="Elongation factor G"/>
    <property type="match status" value="1"/>
</dbReference>
<dbReference type="Gene3D" id="3.30.230.10">
    <property type="match status" value="1"/>
</dbReference>
<dbReference type="Gene3D" id="3.30.70.240">
    <property type="match status" value="1"/>
</dbReference>
<dbReference type="Gene3D" id="3.30.70.870">
    <property type="entry name" value="Elongation Factor G (Translational Gtpase), domain 3"/>
    <property type="match status" value="1"/>
</dbReference>
<dbReference type="Gene3D" id="3.40.50.300">
    <property type="entry name" value="P-loop containing nucleotide triphosphate hydrolases"/>
    <property type="match status" value="1"/>
</dbReference>
<dbReference type="Gene3D" id="2.40.30.10">
    <property type="entry name" value="Translation factors"/>
    <property type="match status" value="1"/>
</dbReference>
<dbReference type="HAMAP" id="MF_00054_B">
    <property type="entry name" value="EF_G_EF_2_B"/>
    <property type="match status" value="1"/>
</dbReference>
<dbReference type="InterPro" id="IPR041095">
    <property type="entry name" value="EFG_II"/>
</dbReference>
<dbReference type="InterPro" id="IPR009022">
    <property type="entry name" value="EFG_III"/>
</dbReference>
<dbReference type="InterPro" id="IPR035647">
    <property type="entry name" value="EFG_III/V"/>
</dbReference>
<dbReference type="InterPro" id="IPR047872">
    <property type="entry name" value="EFG_IV"/>
</dbReference>
<dbReference type="InterPro" id="IPR035649">
    <property type="entry name" value="EFG_V"/>
</dbReference>
<dbReference type="InterPro" id="IPR000640">
    <property type="entry name" value="EFG_V-like"/>
</dbReference>
<dbReference type="InterPro" id="IPR004161">
    <property type="entry name" value="EFTu-like_2"/>
</dbReference>
<dbReference type="InterPro" id="IPR031157">
    <property type="entry name" value="G_TR_CS"/>
</dbReference>
<dbReference type="InterPro" id="IPR027417">
    <property type="entry name" value="P-loop_NTPase"/>
</dbReference>
<dbReference type="InterPro" id="IPR020568">
    <property type="entry name" value="Ribosomal_Su5_D2-typ_SF"/>
</dbReference>
<dbReference type="InterPro" id="IPR014721">
    <property type="entry name" value="Ribsml_uS5_D2-typ_fold_subgr"/>
</dbReference>
<dbReference type="InterPro" id="IPR005225">
    <property type="entry name" value="Small_GTP-bd"/>
</dbReference>
<dbReference type="InterPro" id="IPR000795">
    <property type="entry name" value="T_Tr_GTP-bd_dom"/>
</dbReference>
<dbReference type="InterPro" id="IPR009000">
    <property type="entry name" value="Transl_B-barrel_sf"/>
</dbReference>
<dbReference type="InterPro" id="IPR004540">
    <property type="entry name" value="Transl_elong_EFG/EF2"/>
</dbReference>
<dbReference type="InterPro" id="IPR005517">
    <property type="entry name" value="Transl_elong_EFG/EF2_IV"/>
</dbReference>
<dbReference type="NCBIfam" id="TIGR00484">
    <property type="entry name" value="EF-G"/>
    <property type="match status" value="1"/>
</dbReference>
<dbReference type="NCBIfam" id="NF009381">
    <property type="entry name" value="PRK12740.1-5"/>
    <property type="match status" value="1"/>
</dbReference>
<dbReference type="NCBIfam" id="TIGR00231">
    <property type="entry name" value="small_GTP"/>
    <property type="match status" value="1"/>
</dbReference>
<dbReference type="PANTHER" id="PTHR43261:SF1">
    <property type="entry name" value="RIBOSOME-RELEASING FACTOR 2, MITOCHONDRIAL"/>
    <property type="match status" value="1"/>
</dbReference>
<dbReference type="PANTHER" id="PTHR43261">
    <property type="entry name" value="TRANSLATION ELONGATION FACTOR G-RELATED"/>
    <property type="match status" value="1"/>
</dbReference>
<dbReference type="Pfam" id="PF00679">
    <property type="entry name" value="EFG_C"/>
    <property type="match status" value="1"/>
</dbReference>
<dbReference type="Pfam" id="PF14492">
    <property type="entry name" value="EFG_III"/>
    <property type="match status" value="1"/>
</dbReference>
<dbReference type="Pfam" id="PF03764">
    <property type="entry name" value="EFG_IV"/>
    <property type="match status" value="1"/>
</dbReference>
<dbReference type="Pfam" id="PF00009">
    <property type="entry name" value="GTP_EFTU"/>
    <property type="match status" value="1"/>
</dbReference>
<dbReference type="Pfam" id="PF03144">
    <property type="entry name" value="GTP_EFTU_D2"/>
    <property type="match status" value="1"/>
</dbReference>
<dbReference type="PRINTS" id="PR00315">
    <property type="entry name" value="ELONGATNFCT"/>
</dbReference>
<dbReference type="SMART" id="SM00838">
    <property type="entry name" value="EFG_C"/>
    <property type="match status" value="1"/>
</dbReference>
<dbReference type="SMART" id="SM00889">
    <property type="entry name" value="EFG_IV"/>
    <property type="match status" value="1"/>
</dbReference>
<dbReference type="SUPFAM" id="SSF54980">
    <property type="entry name" value="EF-G C-terminal domain-like"/>
    <property type="match status" value="2"/>
</dbReference>
<dbReference type="SUPFAM" id="SSF52540">
    <property type="entry name" value="P-loop containing nucleoside triphosphate hydrolases"/>
    <property type="match status" value="1"/>
</dbReference>
<dbReference type="SUPFAM" id="SSF54211">
    <property type="entry name" value="Ribosomal protein S5 domain 2-like"/>
    <property type="match status" value="1"/>
</dbReference>
<dbReference type="SUPFAM" id="SSF50447">
    <property type="entry name" value="Translation proteins"/>
    <property type="match status" value="1"/>
</dbReference>
<dbReference type="PROSITE" id="PS00301">
    <property type="entry name" value="G_TR_1"/>
    <property type="match status" value="1"/>
</dbReference>
<dbReference type="PROSITE" id="PS51722">
    <property type="entry name" value="G_TR_2"/>
    <property type="match status" value="1"/>
</dbReference>
<name>EFG_BUCBP</name>
<feature type="chain" id="PRO_0000091092" description="Elongation factor G">
    <location>
        <begin position="1"/>
        <end position="710"/>
    </location>
</feature>
<feature type="domain" description="tr-type G">
    <location>
        <begin position="8"/>
        <end position="290"/>
    </location>
</feature>
<feature type="binding site" evidence="1">
    <location>
        <begin position="17"/>
        <end position="24"/>
    </location>
    <ligand>
        <name>GTP</name>
        <dbReference type="ChEBI" id="CHEBI:37565"/>
    </ligand>
</feature>
<feature type="binding site" evidence="1">
    <location>
        <begin position="88"/>
        <end position="92"/>
    </location>
    <ligand>
        <name>GTP</name>
        <dbReference type="ChEBI" id="CHEBI:37565"/>
    </ligand>
</feature>
<feature type="binding site" evidence="1">
    <location>
        <begin position="142"/>
        <end position="145"/>
    </location>
    <ligand>
        <name>GTP</name>
        <dbReference type="ChEBI" id="CHEBI:37565"/>
    </ligand>
</feature>
<protein>
    <recommendedName>
        <fullName evidence="1">Elongation factor G</fullName>
        <shortName evidence="1">EF-G</shortName>
    </recommendedName>
</protein>
<evidence type="ECO:0000255" key="1">
    <source>
        <dbReference type="HAMAP-Rule" id="MF_00054"/>
    </source>
</evidence>
<reference key="1">
    <citation type="journal article" date="2003" name="Proc. Natl. Acad. Sci. U.S.A.">
        <title>Reductive genome evolution in Buchnera aphidicola.</title>
        <authorList>
            <person name="van Ham R.C.H.J."/>
            <person name="Kamerbeek J."/>
            <person name="Palacios C."/>
            <person name="Rausell C."/>
            <person name="Abascal F."/>
            <person name="Bastolla U."/>
            <person name="Fernandez J.M."/>
            <person name="Jimenez L."/>
            <person name="Postigo M."/>
            <person name="Silva F.J."/>
            <person name="Tamames J."/>
            <person name="Viguera E."/>
            <person name="Latorre A."/>
            <person name="Valencia A."/>
            <person name="Moran F."/>
            <person name="Moya A."/>
        </authorList>
    </citation>
    <scope>NUCLEOTIDE SEQUENCE [LARGE SCALE GENOMIC DNA]</scope>
    <source>
        <strain>Bp</strain>
    </source>
</reference>
<accession>P59451</accession>
<comment type="function">
    <text evidence="1">Catalyzes the GTP-dependent ribosomal translocation step during translation elongation. During this step, the ribosome changes from the pre-translocational (PRE) to the post-translocational (POST) state as the newly formed A-site-bound peptidyl-tRNA and P-site-bound deacylated tRNA move to the P and E sites, respectively. Catalyzes the coordinated movement of the two tRNA molecules, the mRNA and conformational changes in the ribosome.</text>
</comment>
<comment type="subcellular location">
    <subcellularLocation>
        <location evidence="1">Cytoplasm</location>
    </subcellularLocation>
</comment>
<comment type="similarity">
    <text evidence="1">Belongs to the TRAFAC class translation factor GTPase superfamily. Classic translation factor GTPase family. EF-G/EF-2 subfamily.</text>
</comment>
<keyword id="KW-0963">Cytoplasm</keyword>
<keyword id="KW-0251">Elongation factor</keyword>
<keyword id="KW-0342">GTP-binding</keyword>
<keyword id="KW-0547">Nucleotide-binding</keyword>
<keyword id="KW-0648">Protein biosynthesis</keyword>
<keyword id="KW-1185">Reference proteome</keyword>
<sequence length="710" mass="79363">MARITPVSQYRNIGISAHIDAGKTTTTERILFYTGINHKIGEVHDGAATMDWMEQEQERGITITSAATTTFWSGMSKQFLPHRINIIDTPGHVDFTIEVERSMRVLDGAVMIYCAVGGVQPQSETVWRQVNKYNVPRIAFINKMDRMGANFFNVVKQMNERLGIDPVPIQIPINSEENFSGVIDLIRMKAIYWDDLDKGITFKYDNIPSDLTVLSDRWRQKLIESAVENDDFLMDKYLTGKKLSEYEIKNSLRQRVLNNEIVLITCGSAFKNKGVQALLDAIVEYLPSPMDVASYNVKKISQKSNSKKSCSSNMDLSNDQEAFVALAFKIATDPFVGNLTFFRVYSGKVSSGDVIYNSVKKKKERFGRIVQMHANKREEIKEVRAGDIAAAIGLKSVTTGDTLCDPNNVVVLEKMDFPDPVISIAVEPKTKIDQEKMSVALNRLAKEDPSFKVHTDRESNQTIISGMGELHLEIIVDRMRREFGVGANIGQPQVSYRETIQSSVKNVEGKYIKQSGGRGQYGHVVIDLFPLKPLNQSGYIFINDIKGGIIPGEYISAIDKGIQEQLLYGPLAGYSVVDIGVRLHFGSYHDVDSSEIAFKLAASLAFKSAFKKANPVLLEPIMKVEVETPEEYMGDVIGDLNRRRGMIEGMIDLSIGKSIRAQVPLSCMFGYATDVRSQTQGRASYSMEFLKYSEAPVHVASSIIQNRDKN</sequence>
<organism>
    <name type="scientific">Buchnera aphidicola subsp. Baizongia pistaciae (strain Bp)</name>
    <dbReference type="NCBI Taxonomy" id="224915"/>
    <lineage>
        <taxon>Bacteria</taxon>
        <taxon>Pseudomonadati</taxon>
        <taxon>Pseudomonadota</taxon>
        <taxon>Gammaproteobacteria</taxon>
        <taxon>Enterobacterales</taxon>
        <taxon>Erwiniaceae</taxon>
        <taxon>Buchnera</taxon>
    </lineage>
</organism>